<organism>
    <name type="scientific">Aspergillus fumigatus (strain CBS 144.89 / FGSC A1163 / CEA10)</name>
    <name type="common">Neosartorya fumigata</name>
    <dbReference type="NCBI Taxonomy" id="451804"/>
    <lineage>
        <taxon>Eukaryota</taxon>
        <taxon>Fungi</taxon>
        <taxon>Dikarya</taxon>
        <taxon>Ascomycota</taxon>
        <taxon>Pezizomycotina</taxon>
        <taxon>Eurotiomycetes</taxon>
        <taxon>Eurotiomycetidae</taxon>
        <taxon>Eurotiales</taxon>
        <taxon>Aspergillaceae</taxon>
        <taxon>Aspergillus</taxon>
        <taxon>Aspergillus subgen. Fumigati</taxon>
    </lineage>
</organism>
<gene>
    <name type="primary">casA</name>
    <name type="ORF">AFUB_007090</name>
</gene>
<protein>
    <recommendedName>
        <fullName>Metacaspase-1A</fullName>
        <ecNumber>3.4.22.-</ecNumber>
    </recommendedName>
</protein>
<keyword id="KW-0053">Apoptosis</keyword>
<keyword id="KW-0378">Hydrolase</keyword>
<keyword id="KW-0645">Protease</keyword>
<keyword id="KW-0788">Thiol protease</keyword>
<keyword id="KW-0865">Zymogen</keyword>
<dbReference type="EC" id="3.4.22.-"/>
<dbReference type="EMBL" id="DS499594">
    <property type="protein sequence ID" value="EDP56007.1"/>
    <property type="status" value="ALT_SEQ"/>
    <property type="molecule type" value="Genomic_DNA"/>
</dbReference>
<dbReference type="SMR" id="B0XPP3"/>
<dbReference type="OrthoDB" id="96545at5052"/>
<dbReference type="PhylomeDB" id="B0XPP3"/>
<dbReference type="Proteomes" id="UP000001699">
    <property type="component" value="Unassembled WGS sequence"/>
</dbReference>
<dbReference type="GO" id="GO:0005737">
    <property type="term" value="C:cytoplasm"/>
    <property type="evidence" value="ECO:0007669"/>
    <property type="project" value="TreeGrafter"/>
</dbReference>
<dbReference type="GO" id="GO:0004197">
    <property type="term" value="F:cysteine-type endopeptidase activity"/>
    <property type="evidence" value="ECO:0007669"/>
    <property type="project" value="InterPro"/>
</dbReference>
<dbReference type="GO" id="GO:0006915">
    <property type="term" value="P:apoptotic process"/>
    <property type="evidence" value="ECO:0007669"/>
    <property type="project" value="UniProtKB-KW"/>
</dbReference>
<dbReference type="GO" id="GO:0006508">
    <property type="term" value="P:proteolysis"/>
    <property type="evidence" value="ECO:0007669"/>
    <property type="project" value="UniProtKB-KW"/>
</dbReference>
<dbReference type="Gene3D" id="3.40.50.12660">
    <property type="match status" value="1"/>
</dbReference>
<dbReference type="InterPro" id="IPR029030">
    <property type="entry name" value="Caspase-like_dom_sf"/>
</dbReference>
<dbReference type="InterPro" id="IPR050452">
    <property type="entry name" value="Metacaspase"/>
</dbReference>
<dbReference type="InterPro" id="IPR011600">
    <property type="entry name" value="Pept_C14_caspase"/>
</dbReference>
<dbReference type="PANTHER" id="PTHR48104:SF30">
    <property type="entry name" value="METACASPASE-1"/>
    <property type="match status" value="1"/>
</dbReference>
<dbReference type="PANTHER" id="PTHR48104">
    <property type="entry name" value="METACASPASE-4"/>
    <property type="match status" value="1"/>
</dbReference>
<dbReference type="Pfam" id="PF00656">
    <property type="entry name" value="Peptidase_C14"/>
    <property type="match status" value="1"/>
</dbReference>
<dbReference type="SUPFAM" id="SSF52129">
    <property type="entry name" value="Caspase-like"/>
    <property type="match status" value="1"/>
</dbReference>
<reference key="1">
    <citation type="journal article" date="2008" name="PLoS Genet.">
        <title>Genomic islands in the pathogenic filamentous fungus Aspergillus fumigatus.</title>
        <authorList>
            <person name="Fedorova N.D."/>
            <person name="Khaldi N."/>
            <person name="Joardar V.S."/>
            <person name="Maiti R."/>
            <person name="Amedeo P."/>
            <person name="Anderson M.J."/>
            <person name="Crabtree J."/>
            <person name="Silva J.C."/>
            <person name="Badger J.H."/>
            <person name="Albarraq A."/>
            <person name="Angiuoli S."/>
            <person name="Bussey H."/>
            <person name="Bowyer P."/>
            <person name="Cotty P.J."/>
            <person name="Dyer P.S."/>
            <person name="Egan A."/>
            <person name="Galens K."/>
            <person name="Fraser-Liggett C.M."/>
            <person name="Haas B.J."/>
            <person name="Inman J.M."/>
            <person name="Kent R."/>
            <person name="Lemieux S."/>
            <person name="Malavazi I."/>
            <person name="Orvis J."/>
            <person name="Roemer T."/>
            <person name="Ronning C.M."/>
            <person name="Sundaram J.P."/>
            <person name="Sutton G."/>
            <person name="Turner G."/>
            <person name="Venter J.C."/>
            <person name="White O.R."/>
            <person name="Whitty B.R."/>
            <person name="Youngman P."/>
            <person name="Wolfe K.H."/>
            <person name="Goldman G.H."/>
            <person name="Wortman J.R."/>
            <person name="Jiang B."/>
            <person name="Denning D.W."/>
            <person name="Nierman W.C."/>
        </authorList>
    </citation>
    <scope>NUCLEOTIDE SEQUENCE [LARGE SCALE GENOMIC DNA]</scope>
    <source>
        <strain>CBS 144.89 / FGSC A1163 / CEA10</strain>
    </source>
</reference>
<evidence type="ECO:0000250" key="1"/>
<evidence type="ECO:0000255" key="2"/>
<evidence type="ECO:0000256" key="3">
    <source>
        <dbReference type="SAM" id="MobiDB-lite"/>
    </source>
</evidence>
<evidence type="ECO:0000305" key="4"/>
<sequence length="413" mass="45199">MQNHHHQQSSYGGGYPGQAYREQHPPPNPYGYGQPSPQPGYGAPPPHNGYGQPPSGYGQPPPPTGNAVYGGRQPGMNQYQNTYSHGHQGGPPPPPTDPVAFGHGAPQGYSFQYSRCTGKRKALLIGINYFGQKGQLRGCINDVKNMSTYLNQNFGYAREDMVLLTDDQQNPMSQPTKANILRAMHWLVKDAQPNDSLFFHYSGHGGQTPDLDGDEEDGYDEVIYPVDFRQAGHIVDDEMHRIMVRPLRPGVRLTAIFDSCHSGSALDLPYIYSTQGILKEPNLAKEAGQGLLGVVSAYARGDMSGMVSTAVGFLKRATKGDEAYTRSKQTKTSPADVIMWSGSKDSQTSQDAQIGGQATGAMSWAFITALRKNPQQSYVQLLNSIRDELATKYSQKPQLSCSHPLDTNLLYVM</sequence>
<feature type="propeptide" id="PRO_0000333616" evidence="2">
    <location>
        <begin position="1"/>
        <end status="unknown"/>
    </location>
</feature>
<feature type="chain" id="PRO_0000333617" description="Metacaspase-1A">
    <location>
        <begin status="unknown"/>
        <end position="413"/>
    </location>
</feature>
<feature type="region of interest" description="Disordered" evidence="3">
    <location>
        <begin position="1"/>
        <end position="104"/>
    </location>
</feature>
<feature type="compositionally biased region" description="Pro residues" evidence="3">
    <location>
        <begin position="36"/>
        <end position="47"/>
    </location>
</feature>
<feature type="compositionally biased region" description="Low complexity" evidence="3">
    <location>
        <begin position="49"/>
        <end position="58"/>
    </location>
</feature>
<feature type="compositionally biased region" description="Polar residues" evidence="3">
    <location>
        <begin position="75"/>
        <end position="85"/>
    </location>
</feature>
<feature type="active site" evidence="1">
    <location>
        <position position="204"/>
    </location>
</feature>
<feature type="active site" evidence="1">
    <location>
        <position position="260"/>
    </location>
</feature>
<name>MCA1A_ASPFC</name>
<comment type="function">
    <text evidence="1">Involved in cell death (apoptosis) (By similarity). Required for the apoptotic-like loss of membrane phospholipid asymmetry at stationary phase and facilitates growth under conditions of endoplasmic reticulum stress.</text>
</comment>
<comment type="similarity">
    <text evidence="4">Belongs to the peptidase C14B family.</text>
</comment>
<comment type="sequence caution" evidence="4">
    <conflict type="erroneous gene model prediction">
        <sequence resource="EMBL-CDS" id="EDP56007"/>
    </conflict>
</comment>
<proteinExistence type="inferred from homology"/>
<accession>B0XPP3</accession>